<organism>
    <name type="scientific">Pseudomonas fluorescens (strain Pf0-1)</name>
    <dbReference type="NCBI Taxonomy" id="205922"/>
    <lineage>
        <taxon>Bacteria</taxon>
        <taxon>Pseudomonadati</taxon>
        <taxon>Pseudomonadota</taxon>
        <taxon>Gammaproteobacteria</taxon>
        <taxon>Pseudomonadales</taxon>
        <taxon>Pseudomonadaceae</taxon>
        <taxon>Pseudomonas</taxon>
    </lineage>
</organism>
<comment type="function">
    <text evidence="1">One of several proteins that assist in the late maturation steps of the functional core of the 30S ribosomal subunit. Helps release RbfA from mature subunits. May play a role in the assembly of ribosomal proteins into the subunit. Circularly permuted GTPase that catalyzes slow GTP hydrolysis, GTPase activity is stimulated by the 30S ribosomal subunit.</text>
</comment>
<comment type="cofactor">
    <cofactor evidence="1">
        <name>Zn(2+)</name>
        <dbReference type="ChEBI" id="CHEBI:29105"/>
    </cofactor>
    <text evidence="1">Binds 1 zinc ion per subunit.</text>
</comment>
<comment type="subunit">
    <text evidence="1">Monomer. Associates with 30S ribosomal subunit, binds 16S rRNA.</text>
</comment>
<comment type="subcellular location">
    <subcellularLocation>
        <location evidence="1">Cytoplasm</location>
    </subcellularLocation>
</comment>
<comment type="similarity">
    <text evidence="1">Belongs to the TRAFAC class YlqF/YawG GTPase family. RsgA subfamily.</text>
</comment>
<keyword id="KW-0963">Cytoplasm</keyword>
<keyword id="KW-0342">GTP-binding</keyword>
<keyword id="KW-0378">Hydrolase</keyword>
<keyword id="KW-0479">Metal-binding</keyword>
<keyword id="KW-0547">Nucleotide-binding</keyword>
<keyword id="KW-0690">Ribosome biogenesis</keyword>
<keyword id="KW-0694">RNA-binding</keyword>
<keyword id="KW-0699">rRNA-binding</keyword>
<keyword id="KW-0862">Zinc</keyword>
<feature type="chain" id="PRO_1000216052" description="Small ribosomal subunit biogenesis GTPase RsgA">
    <location>
        <begin position="1"/>
        <end position="343"/>
    </location>
</feature>
<feature type="domain" description="CP-type G" evidence="2">
    <location>
        <begin position="116"/>
        <end position="275"/>
    </location>
</feature>
<feature type="binding site" evidence="1">
    <location>
        <begin position="163"/>
        <end position="166"/>
    </location>
    <ligand>
        <name>GTP</name>
        <dbReference type="ChEBI" id="CHEBI:37565"/>
    </ligand>
</feature>
<feature type="binding site" evidence="1">
    <location>
        <begin position="217"/>
        <end position="225"/>
    </location>
    <ligand>
        <name>GTP</name>
        <dbReference type="ChEBI" id="CHEBI:37565"/>
    </ligand>
</feature>
<feature type="binding site" evidence="1">
    <location>
        <position position="299"/>
    </location>
    <ligand>
        <name>Zn(2+)</name>
        <dbReference type="ChEBI" id="CHEBI:29105"/>
    </ligand>
</feature>
<feature type="binding site" evidence="1">
    <location>
        <position position="304"/>
    </location>
    <ligand>
        <name>Zn(2+)</name>
        <dbReference type="ChEBI" id="CHEBI:29105"/>
    </ligand>
</feature>
<feature type="binding site" evidence="1">
    <location>
        <position position="306"/>
    </location>
    <ligand>
        <name>Zn(2+)</name>
        <dbReference type="ChEBI" id="CHEBI:29105"/>
    </ligand>
</feature>
<feature type="binding site" evidence="1">
    <location>
        <position position="312"/>
    </location>
    <ligand>
        <name>Zn(2+)</name>
        <dbReference type="ChEBI" id="CHEBI:29105"/>
    </ligand>
</feature>
<sequence length="343" mass="37371">MAKRQLNRRQNWRIEKIQGERAARAAKRESSAVEALEGGDLGPEQHGLVIAHFGVQVEVEAVDGELAGQVFRCHLRANLPALVTGDQVVWRAGNQGIGVIVAQLPRTTELCRPDSRGQLKPVAANVDMIVIVFAPLPEPHANLIDRYLVAAEHAGIRPLLLLNKFDLIDEQNAPALNALLAVYRTLGYPVLEVSAHHGNGMEQLQKQLDGRISVFVGQSGVGKSSLVNSLLPEVETRVGPLSELSGQGTHTTTTARLFHFPGGGELIDSPGIREFGLGHVSRADVEAGFIEFNDLLGTCRFRDCKHDREPGCALLKALEDGRVQQQRMNSYRSIIASLPENGY</sequence>
<dbReference type="EC" id="3.6.1.-" evidence="1"/>
<dbReference type="EMBL" id="CP000094">
    <property type="protein sequence ID" value="ABA72258.1"/>
    <property type="molecule type" value="Genomic_DNA"/>
</dbReference>
<dbReference type="RefSeq" id="WP_007950741.1">
    <property type="nucleotide sequence ID" value="NC_007492.2"/>
</dbReference>
<dbReference type="SMR" id="Q3KIZ8"/>
<dbReference type="KEGG" id="pfo:Pfl01_0514"/>
<dbReference type="eggNOG" id="COG1162">
    <property type="taxonomic scope" value="Bacteria"/>
</dbReference>
<dbReference type="HOGENOM" id="CLU_033617_2_0_6"/>
<dbReference type="Proteomes" id="UP000002704">
    <property type="component" value="Chromosome"/>
</dbReference>
<dbReference type="GO" id="GO:0005737">
    <property type="term" value="C:cytoplasm"/>
    <property type="evidence" value="ECO:0007669"/>
    <property type="project" value="UniProtKB-SubCell"/>
</dbReference>
<dbReference type="GO" id="GO:0005525">
    <property type="term" value="F:GTP binding"/>
    <property type="evidence" value="ECO:0007669"/>
    <property type="project" value="UniProtKB-UniRule"/>
</dbReference>
<dbReference type="GO" id="GO:0003924">
    <property type="term" value="F:GTPase activity"/>
    <property type="evidence" value="ECO:0007669"/>
    <property type="project" value="UniProtKB-UniRule"/>
</dbReference>
<dbReference type="GO" id="GO:0046872">
    <property type="term" value="F:metal ion binding"/>
    <property type="evidence" value="ECO:0007669"/>
    <property type="project" value="UniProtKB-KW"/>
</dbReference>
<dbReference type="GO" id="GO:0019843">
    <property type="term" value="F:rRNA binding"/>
    <property type="evidence" value="ECO:0007669"/>
    <property type="project" value="UniProtKB-KW"/>
</dbReference>
<dbReference type="GO" id="GO:0042274">
    <property type="term" value="P:ribosomal small subunit biogenesis"/>
    <property type="evidence" value="ECO:0007669"/>
    <property type="project" value="UniProtKB-UniRule"/>
</dbReference>
<dbReference type="CDD" id="cd01854">
    <property type="entry name" value="YjeQ_EngC"/>
    <property type="match status" value="1"/>
</dbReference>
<dbReference type="Gene3D" id="2.40.50.140">
    <property type="entry name" value="Nucleic acid-binding proteins"/>
    <property type="match status" value="1"/>
</dbReference>
<dbReference type="Gene3D" id="3.40.50.300">
    <property type="entry name" value="P-loop containing nucleotide triphosphate hydrolases"/>
    <property type="match status" value="1"/>
</dbReference>
<dbReference type="Gene3D" id="1.10.40.50">
    <property type="entry name" value="Probable gtpase engc, domain 3"/>
    <property type="match status" value="1"/>
</dbReference>
<dbReference type="HAMAP" id="MF_01820">
    <property type="entry name" value="GTPase_RsgA"/>
    <property type="match status" value="1"/>
</dbReference>
<dbReference type="InterPro" id="IPR030378">
    <property type="entry name" value="G_CP_dom"/>
</dbReference>
<dbReference type="InterPro" id="IPR012340">
    <property type="entry name" value="NA-bd_OB-fold"/>
</dbReference>
<dbReference type="InterPro" id="IPR027417">
    <property type="entry name" value="P-loop_NTPase"/>
</dbReference>
<dbReference type="InterPro" id="IPR004881">
    <property type="entry name" value="Ribosome_biogen_GTPase_RsgA"/>
</dbReference>
<dbReference type="InterPro" id="IPR010914">
    <property type="entry name" value="RsgA_GTPase_dom"/>
</dbReference>
<dbReference type="NCBIfam" id="NF008931">
    <property type="entry name" value="PRK12288.1"/>
    <property type="match status" value="1"/>
</dbReference>
<dbReference type="NCBIfam" id="TIGR00157">
    <property type="entry name" value="ribosome small subunit-dependent GTPase A"/>
    <property type="match status" value="1"/>
</dbReference>
<dbReference type="PANTHER" id="PTHR32120">
    <property type="entry name" value="SMALL RIBOSOMAL SUBUNIT BIOGENESIS GTPASE RSGA"/>
    <property type="match status" value="1"/>
</dbReference>
<dbReference type="PANTHER" id="PTHR32120:SF11">
    <property type="entry name" value="SMALL RIBOSOMAL SUBUNIT BIOGENESIS GTPASE RSGA 1, MITOCHONDRIAL-RELATED"/>
    <property type="match status" value="1"/>
</dbReference>
<dbReference type="Pfam" id="PF03193">
    <property type="entry name" value="RsgA_GTPase"/>
    <property type="match status" value="1"/>
</dbReference>
<dbReference type="SUPFAM" id="SSF52540">
    <property type="entry name" value="P-loop containing nucleoside triphosphate hydrolases"/>
    <property type="match status" value="1"/>
</dbReference>
<dbReference type="PROSITE" id="PS50936">
    <property type="entry name" value="ENGC_GTPASE"/>
    <property type="match status" value="1"/>
</dbReference>
<dbReference type="PROSITE" id="PS51721">
    <property type="entry name" value="G_CP"/>
    <property type="match status" value="1"/>
</dbReference>
<gene>
    <name evidence="1" type="primary">rsgA</name>
    <name type="ordered locus">Pfl01_0514</name>
</gene>
<protein>
    <recommendedName>
        <fullName evidence="1">Small ribosomal subunit biogenesis GTPase RsgA</fullName>
        <ecNumber evidence="1">3.6.1.-</ecNumber>
    </recommendedName>
</protein>
<name>RSGA_PSEPF</name>
<reference key="1">
    <citation type="journal article" date="2009" name="Genome Biol.">
        <title>Genomic and genetic analyses of diversity and plant interactions of Pseudomonas fluorescens.</title>
        <authorList>
            <person name="Silby M.W."/>
            <person name="Cerdeno-Tarraga A.M."/>
            <person name="Vernikos G.S."/>
            <person name="Giddens S.R."/>
            <person name="Jackson R.W."/>
            <person name="Preston G.M."/>
            <person name="Zhang X.-X."/>
            <person name="Moon C.D."/>
            <person name="Gehrig S.M."/>
            <person name="Godfrey S.A.C."/>
            <person name="Knight C.G."/>
            <person name="Malone J.G."/>
            <person name="Robinson Z."/>
            <person name="Spiers A.J."/>
            <person name="Harris S."/>
            <person name="Challis G.L."/>
            <person name="Yaxley A.M."/>
            <person name="Harris D."/>
            <person name="Seeger K."/>
            <person name="Murphy L."/>
            <person name="Rutter S."/>
            <person name="Squares R."/>
            <person name="Quail M.A."/>
            <person name="Saunders E."/>
            <person name="Mavromatis K."/>
            <person name="Brettin T.S."/>
            <person name="Bentley S.D."/>
            <person name="Hothersall J."/>
            <person name="Stephens E."/>
            <person name="Thomas C.M."/>
            <person name="Parkhill J."/>
            <person name="Levy S.B."/>
            <person name="Rainey P.B."/>
            <person name="Thomson N.R."/>
        </authorList>
    </citation>
    <scope>NUCLEOTIDE SEQUENCE [LARGE SCALE GENOMIC DNA]</scope>
    <source>
        <strain>Pf0-1</strain>
    </source>
</reference>
<proteinExistence type="inferred from homology"/>
<evidence type="ECO:0000255" key="1">
    <source>
        <dbReference type="HAMAP-Rule" id="MF_01820"/>
    </source>
</evidence>
<evidence type="ECO:0000255" key="2">
    <source>
        <dbReference type="PROSITE-ProRule" id="PRU01058"/>
    </source>
</evidence>
<accession>Q3KIZ8</accession>